<feature type="chain" id="PRO_0000117207" description="tRNA uridine 5-carboxymethylaminomethyl modification enzyme MnmG">
    <location>
        <begin position="1"/>
        <end position="614"/>
    </location>
</feature>
<feature type="binding site" evidence="1">
    <location>
        <begin position="10"/>
        <end position="15"/>
    </location>
    <ligand>
        <name>FAD</name>
        <dbReference type="ChEBI" id="CHEBI:57692"/>
    </ligand>
</feature>
<feature type="binding site" evidence="1">
    <location>
        <begin position="271"/>
        <end position="285"/>
    </location>
    <ligand>
        <name>NAD(+)</name>
        <dbReference type="ChEBI" id="CHEBI:57540"/>
    </ligand>
</feature>
<reference key="1">
    <citation type="journal article" date="2000" name="Nature">
        <title>The complete sequence of the mucosal pathogen Ureaplasma urealyticum.</title>
        <authorList>
            <person name="Glass J.I."/>
            <person name="Lefkowitz E.J."/>
            <person name="Glass J.S."/>
            <person name="Heiner C.R."/>
            <person name="Chen E.Y."/>
            <person name="Cassell G.H."/>
        </authorList>
    </citation>
    <scope>NUCLEOTIDE SEQUENCE [LARGE SCALE GENOMIC DNA]</scope>
    <source>
        <strain>ATCC 700970</strain>
    </source>
</reference>
<comment type="function">
    <text evidence="1">NAD-binding protein involved in the addition of a carboxymethylaminomethyl (cmnm) group at the wobble position (U34) of certain tRNAs, forming tRNA-cmnm(5)s(2)U34.</text>
</comment>
<comment type="cofactor">
    <cofactor evidence="1">
        <name>FAD</name>
        <dbReference type="ChEBI" id="CHEBI:57692"/>
    </cofactor>
</comment>
<comment type="subunit">
    <text evidence="1">Homodimer. Heterotetramer of two MnmE and two MnmG subunits.</text>
</comment>
<comment type="subcellular location">
    <subcellularLocation>
        <location evidence="1">Cytoplasm</location>
    </subcellularLocation>
</comment>
<comment type="similarity">
    <text evidence="1">Belongs to the MnmG family.</text>
</comment>
<sequence length="614" mass="69193">MKKYDVIVIGAGHAGLEAAFATSNLNLQTALITLDEKGIGMMPCNPSIGGPAKGIVTREIDALGGIQGKAADATTMQMKILNSSKGPGVWAIRAQIDKIAYQRWFKQQIKQQKNLDLIIAEVSDLLVENNIVKGVVLSDQKIIQADYVIITTGTYLKSITHRGSVCVDEGADGTKNAKFLSDALVKLGFELIRLKTGTPARIKKDSIDFTNMILEPGTNQKIAFSHYHPVYKPYDEQLPCHIIYTNEQTHQIIRENLNKSAMYGGMISGIGPRYCPSIEDKIVKFSEKPRHQIFVEPESYELDSMYLGGFSTSMPIDVQEKMIRSLPGLENCEILKYAYAIEYDAIDPTQLYPSLESKLVNNLFFAGQINGTSGYEEAAAQGLMAAINVNQKYQNKEPVILGRDQAYIGVMIDDIVTKGVVEPYRLLTSRAEHRLALRNDNADDRLMKIGFEIGLLKPEVYDQYLNNLKQIKEILNWLKTTTVGQIDDLKFTTLKTNSYLIDYLKRPEIKLNDLLIYCPIKIEDEQIINKVQIQVKFEGYIKNQEENLKQLKRLNNIKLHAIVDYKEVPNISLETIDKLNKIKPLDLEQASRISGVNLTDIAMIKYYLERIKND</sequence>
<name>MNMG_UREPA</name>
<accession>Q9PRA6</accession>
<organism>
    <name type="scientific">Ureaplasma parvum serovar 3 (strain ATCC 700970)</name>
    <dbReference type="NCBI Taxonomy" id="273119"/>
    <lineage>
        <taxon>Bacteria</taxon>
        <taxon>Bacillati</taxon>
        <taxon>Mycoplasmatota</taxon>
        <taxon>Mycoplasmoidales</taxon>
        <taxon>Mycoplasmoidaceae</taxon>
        <taxon>Ureaplasma</taxon>
    </lineage>
</organism>
<gene>
    <name evidence="1" type="primary">mnmG</name>
    <name evidence="1" type="synonym">gidA</name>
    <name type="ordered locus">UU039</name>
</gene>
<evidence type="ECO:0000255" key="1">
    <source>
        <dbReference type="HAMAP-Rule" id="MF_00129"/>
    </source>
</evidence>
<keyword id="KW-0963">Cytoplasm</keyword>
<keyword id="KW-0274">FAD</keyword>
<keyword id="KW-0285">Flavoprotein</keyword>
<keyword id="KW-0520">NAD</keyword>
<keyword id="KW-1185">Reference proteome</keyword>
<keyword id="KW-0819">tRNA processing</keyword>
<dbReference type="EMBL" id="AF222894">
    <property type="protein sequence ID" value="AAF30444.1"/>
    <property type="molecule type" value="Genomic_DNA"/>
</dbReference>
<dbReference type="RefSeq" id="WP_010891662.1">
    <property type="nucleotide sequence ID" value="NC_002162.1"/>
</dbReference>
<dbReference type="SMR" id="Q9PRA6"/>
<dbReference type="STRING" id="273119.UU039"/>
<dbReference type="EnsemblBacteria" id="AAF30444">
    <property type="protein sequence ID" value="AAF30444"/>
    <property type="gene ID" value="UU039"/>
</dbReference>
<dbReference type="GeneID" id="29672170"/>
<dbReference type="KEGG" id="uur:UU039"/>
<dbReference type="PATRIC" id="fig|273119.6.peg.41"/>
<dbReference type="eggNOG" id="COG0445">
    <property type="taxonomic scope" value="Bacteria"/>
</dbReference>
<dbReference type="HOGENOM" id="CLU_007831_2_2_14"/>
<dbReference type="OrthoDB" id="9815560at2"/>
<dbReference type="Proteomes" id="UP000000423">
    <property type="component" value="Chromosome"/>
</dbReference>
<dbReference type="GO" id="GO:0005829">
    <property type="term" value="C:cytosol"/>
    <property type="evidence" value="ECO:0007669"/>
    <property type="project" value="TreeGrafter"/>
</dbReference>
<dbReference type="GO" id="GO:0050660">
    <property type="term" value="F:flavin adenine dinucleotide binding"/>
    <property type="evidence" value="ECO:0007669"/>
    <property type="project" value="UniProtKB-UniRule"/>
</dbReference>
<dbReference type="GO" id="GO:0030488">
    <property type="term" value="P:tRNA methylation"/>
    <property type="evidence" value="ECO:0007669"/>
    <property type="project" value="TreeGrafter"/>
</dbReference>
<dbReference type="GO" id="GO:0002098">
    <property type="term" value="P:tRNA wobble uridine modification"/>
    <property type="evidence" value="ECO:0007669"/>
    <property type="project" value="InterPro"/>
</dbReference>
<dbReference type="FunFam" id="3.50.50.60:FF:000002">
    <property type="entry name" value="tRNA uridine 5-carboxymethylaminomethyl modification enzyme MnmG"/>
    <property type="match status" value="1"/>
</dbReference>
<dbReference type="Gene3D" id="3.50.50.60">
    <property type="entry name" value="FAD/NAD(P)-binding domain"/>
    <property type="match status" value="2"/>
</dbReference>
<dbReference type="Gene3D" id="1.10.150.570">
    <property type="entry name" value="GidA associated domain, C-terminal subdomain"/>
    <property type="match status" value="1"/>
</dbReference>
<dbReference type="Gene3D" id="1.10.10.1800">
    <property type="entry name" value="tRNA uridine 5-carboxymethylaminomethyl modification enzyme MnmG/GidA"/>
    <property type="match status" value="1"/>
</dbReference>
<dbReference type="HAMAP" id="MF_00129">
    <property type="entry name" value="MnmG_GidA"/>
    <property type="match status" value="1"/>
</dbReference>
<dbReference type="InterPro" id="IPR036188">
    <property type="entry name" value="FAD/NAD-bd_sf"/>
</dbReference>
<dbReference type="InterPro" id="IPR049312">
    <property type="entry name" value="GIDA_C_N"/>
</dbReference>
<dbReference type="InterPro" id="IPR004416">
    <property type="entry name" value="MnmG"/>
</dbReference>
<dbReference type="InterPro" id="IPR002218">
    <property type="entry name" value="MnmG-rel"/>
</dbReference>
<dbReference type="InterPro" id="IPR020595">
    <property type="entry name" value="MnmG-rel_CS"/>
</dbReference>
<dbReference type="InterPro" id="IPR026904">
    <property type="entry name" value="MnmG_C"/>
</dbReference>
<dbReference type="InterPro" id="IPR047001">
    <property type="entry name" value="MnmG_C_subdom"/>
</dbReference>
<dbReference type="InterPro" id="IPR044920">
    <property type="entry name" value="MnmG_C_subdom_sf"/>
</dbReference>
<dbReference type="InterPro" id="IPR040131">
    <property type="entry name" value="MnmG_N"/>
</dbReference>
<dbReference type="NCBIfam" id="TIGR00136">
    <property type="entry name" value="mnmG_gidA"/>
    <property type="match status" value="1"/>
</dbReference>
<dbReference type="PANTHER" id="PTHR11806">
    <property type="entry name" value="GLUCOSE INHIBITED DIVISION PROTEIN A"/>
    <property type="match status" value="1"/>
</dbReference>
<dbReference type="PANTHER" id="PTHR11806:SF0">
    <property type="entry name" value="PROTEIN MTO1 HOMOLOG, MITOCHONDRIAL"/>
    <property type="match status" value="1"/>
</dbReference>
<dbReference type="Pfam" id="PF01134">
    <property type="entry name" value="GIDA"/>
    <property type="match status" value="1"/>
</dbReference>
<dbReference type="Pfam" id="PF21680">
    <property type="entry name" value="GIDA_C_1st"/>
    <property type="match status" value="1"/>
</dbReference>
<dbReference type="Pfam" id="PF13932">
    <property type="entry name" value="SAM_GIDA_C"/>
    <property type="match status" value="1"/>
</dbReference>
<dbReference type="SMART" id="SM01228">
    <property type="entry name" value="GIDA_assoc_3"/>
    <property type="match status" value="1"/>
</dbReference>
<dbReference type="SUPFAM" id="SSF51905">
    <property type="entry name" value="FAD/NAD(P)-binding domain"/>
    <property type="match status" value="1"/>
</dbReference>
<dbReference type="PROSITE" id="PS01280">
    <property type="entry name" value="GIDA_1"/>
    <property type="match status" value="1"/>
</dbReference>
<dbReference type="PROSITE" id="PS01281">
    <property type="entry name" value="GIDA_2"/>
    <property type="match status" value="1"/>
</dbReference>
<protein>
    <recommendedName>
        <fullName evidence="1">tRNA uridine 5-carboxymethylaminomethyl modification enzyme MnmG</fullName>
    </recommendedName>
    <alternativeName>
        <fullName evidence="1">Glucose-inhibited division protein A</fullName>
    </alternativeName>
</protein>
<proteinExistence type="inferred from homology"/>